<feature type="chain" id="PRO_0000107809" description="Gluconeogenesis factor">
    <location>
        <begin position="1"/>
        <end position="322"/>
    </location>
</feature>
<protein>
    <recommendedName>
        <fullName evidence="1">Gluconeogenesis factor</fullName>
    </recommendedName>
</protein>
<organism>
    <name type="scientific">Listeria monocytogenes serovar 1/2a (strain ATCC BAA-679 / EGD-e)</name>
    <dbReference type="NCBI Taxonomy" id="169963"/>
    <lineage>
        <taxon>Bacteria</taxon>
        <taxon>Bacillati</taxon>
        <taxon>Bacillota</taxon>
        <taxon>Bacilli</taxon>
        <taxon>Bacillales</taxon>
        <taxon>Listeriaceae</taxon>
        <taxon>Listeria</taxon>
    </lineage>
</organism>
<name>GNGF_LISMO</name>
<gene>
    <name type="ordered locus">lmo2473</name>
</gene>
<dbReference type="EMBL" id="AL591983">
    <property type="protein sequence ID" value="CAD00551.1"/>
    <property type="molecule type" value="Genomic_DNA"/>
</dbReference>
<dbReference type="PIR" id="AI1383">
    <property type="entry name" value="AI1383"/>
</dbReference>
<dbReference type="RefSeq" id="NP_465996.1">
    <property type="nucleotide sequence ID" value="NC_003210.1"/>
</dbReference>
<dbReference type="RefSeq" id="WP_003722605.1">
    <property type="nucleotide sequence ID" value="NZ_CP149495.1"/>
</dbReference>
<dbReference type="SMR" id="P58588"/>
<dbReference type="STRING" id="169963.gene:17595184"/>
<dbReference type="PaxDb" id="169963-lmo2473"/>
<dbReference type="EnsemblBacteria" id="CAD00551">
    <property type="protein sequence ID" value="CAD00551"/>
    <property type="gene ID" value="CAD00551"/>
</dbReference>
<dbReference type="GeneID" id="987352"/>
<dbReference type="KEGG" id="lmo:lmo2473"/>
<dbReference type="PATRIC" id="fig|169963.11.peg.2533"/>
<dbReference type="eggNOG" id="COG0391">
    <property type="taxonomic scope" value="Bacteria"/>
</dbReference>
<dbReference type="HOGENOM" id="CLU_044041_0_1_9"/>
<dbReference type="OrthoDB" id="9783842at2"/>
<dbReference type="PhylomeDB" id="P58588"/>
<dbReference type="BioCyc" id="LMON169963:LMO2473-MONOMER"/>
<dbReference type="Proteomes" id="UP000000817">
    <property type="component" value="Chromosome"/>
</dbReference>
<dbReference type="GO" id="GO:0005737">
    <property type="term" value="C:cytoplasm"/>
    <property type="evidence" value="ECO:0007669"/>
    <property type="project" value="UniProtKB-SubCell"/>
</dbReference>
<dbReference type="GO" id="GO:0043743">
    <property type="term" value="F:LPPG:FO 2-phospho-L-lactate transferase activity"/>
    <property type="evidence" value="ECO:0007669"/>
    <property type="project" value="InterPro"/>
</dbReference>
<dbReference type="GO" id="GO:0008360">
    <property type="term" value="P:regulation of cell shape"/>
    <property type="evidence" value="ECO:0007669"/>
    <property type="project" value="UniProtKB-UniRule"/>
</dbReference>
<dbReference type="CDD" id="cd07187">
    <property type="entry name" value="YvcK_like"/>
    <property type="match status" value="1"/>
</dbReference>
<dbReference type="Gene3D" id="3.40.50.10680">
    <property type="entry name" value="CofD-like domains"/>
    <property type="match status" value="1"/>
</dbReference>
<dbReference type="HAMAP" id="MF_00973">
    <property type="entry name" value="Gluconeogen_factor"/>
    <property type="match status" value="1"/>
</dbReference>
<dbReference type="InterPro" id="IPR002882">
    <property type="entry name" value="CofD"/>
</dbReference>
<dbReference type="InterPro" id="IPR038136">
    <property type="entry name" value="CofD-like_dom_sf"/>
</dbReference>
<dbReference type="InterPro" id="IPR010119">
    <property type="entry name" value="Gluconeogen_factor"/>
</dbReference>
<dbReference type="NCBIfam" id="TIGR01826">
    <property type="entry name" value="CofD_related"/>
    <property type="match status" value="1"/>
</dbReference>
<dbReference type="PANTHER" id="PTHR30135:SF3">
    <property type="entry name" value="GLUCONEOGENESIS FACTOR-RELATED"/>
    <property type="match status" value="1"/>
</dbReference>
<dbReference type="PANTHER" id="PTHR30135">
    <property type="entry name" value="UNCHARACTERIZED PROTEIN YVCK-RELATED"/>
    <property type="match status" value="1"/>
</dbReference>
<dbReference type="Pfam" id="PF01933">
    <property type="entry name" value="CofD"/>
    <property type="match status" value="1"/>
</dbReference>
<dbReference type="SUPFAM" id="SSF142338">
    <property type="entry name" value="CofD-like"/>
    <property type="match status" value="1"/>
</dbReference>
<proteinExistence type="inferred from homology"/>
<evidence type="ECO:0000255" key="1">
    <source>
        <dbReference type="HAMAP-Rule" id="MF_00973"/>
    </source>
</evidence>
<comment type="function">
    <text evidence="1">Required for morphogenesis under gluconeogenic growth conditions.</text>
</comment>
<comment type="subcellular location">
    <subcellularLocation>
        <location evidence="1">Cytoplasm</location>
    </subcellularLocation>
</comment>
<comment type="similarity">
    <text evidence="1">Belongs to the gluconeogenesis factor family.</text>
</comment>
<keyword id="KW-0963">Cytoplasm</keyword>
<keyword id="KW-1185">Reference proteome</keyword>
<sequence>MKKETKPRVVVIGGGTGLPVILKGLKKKDIHLTAIVTVADDGGSSGKIREQMDVLPPGDIRNVMLALSNVDPRVVDLFQYRFAVDGDLSGHVIGNLILTALSQLNDSYVDAINVLATVLKIRGKVIPATDQPLILNAEMEDGSIVHGESLIPLQGKHINRVYIEPENVKPYPTAVEAVKEADLIVIGPGSLYTSILPNLLLTELADEITASKAPKVYITNILTQIGETDFFSDADHIKVIHEHVGKSFIDKTLINTTTVPKELLFPEDVAQVEHNAKGMEELGVEAIYQDFLSTEDGLVRHAAEKVADALLAMLPNQTNEKE</sequence>
<reference key="1">
    <citation type="journal article" date="2001" name="Science">
        <title>Comparative genomics of Listeria species.</title>
        <authorList>
            <person name="Glaser P."/>
            <person name="Frangeul L."/>
            <person name="Buchrieser C."/>
            <person name="Rusniok C."/>
            <person name="Amend A."/>
            <person name="Baquero F."/>
            <person name="Berche P."/>
            <person name="Bloecker H."/>
            <person name="Brandt P."/>
            <person name="Chakraborty T."/>
            <person name="Charbit A."/>
            <person name="Chetouani F."/>
            <person name="Couve E."/>
            <person name="de Daruvar A."/>
            <person name="Dehoux P."/>
            <person name="Domann E."/>
            <person name="Dominguez-Bernal G."/>
            <person name="Duchaud E."/>
            <person name="Durant L."/>
            <person name="Dussurget O."/>
            <person name="Entian K.-D."/>
            <person name="Fsihi H."/>
            <person name="Garcia-del Portillo F."/>
            <person name="Garrido P."/>
            <person name="Gautier L."/>
            <person name="Goebel W."/>
            <person name="Gomez-Lopez N."/>
            <person name="Hain T."/>
            <person name="Hauf J."/>
            <person name="Jackson D."/>
            <person name="Jones L.-M."/>
            <person name="Kaerst U."/>
            <person name="Kreft J."/>
            <person name="Kuhn M."/>
            <person name="Kunst F."/>
            <person name="Kurapkat G."/>
            <person name="Madueno E."/>
            <person name="Maitournam A."/>
            <person name="Mata Vicente J."/>
            <person name="Ng E."/>
            <person name="Nedjari H."/>
            <person name="Nordsiek G."/>
            <person name="Novella S."/>
            <person name="de Pablos B."/>
            <person name="Perez-Diaz J.-C."/>
            <person name="Purcell R."/>
            <person name="Remmel B."/>
            <person name="Rose M."/>
            <person name="Schlueter T."/>
            <person name="Simoes N."/>
            <person name="Tierrez A."/>
            <person name="Vazquez-Boland J.-A."/>
            <person name="Voss H."/>
            <person name="Wehland J."/>
            <person name="Cossart P."/>
        </authorList>
    </citation>
    <scope>NUCLEOTIDE SEQUENCE [LARGE SCALE GENOMIC DNA]</scope>
    <source>
        <strain>ATCC BAA-679 / EGD-e</strain>
    </source>
</reference>
<accession>P58588</accession>